<dbReference type="EMBL" id="BC080094">
    <property type="protein sequence ID" value="AAH80094.1"/>
    <property type="molecule type" value="mRNA"/>
</dbReference>
<dbReference type="RefSeq" id="NP_001087550.1">
    <property type="nucleotide sequence ID" value="NM_001094081.1"/>
</dbReference>
<dbReference type="SMR" id="Q68EV6"/>
<dbReference type="DNASU" id="447374"/>
<dbReference type="GeneID" id="447374"/>
<dbReference type="KEGG" id="xla:447374"/>
<dbReference type="AGR" id="Xenbase:XB-GENE-6253990"/>
<dbReference type="CTD" id="447374"/>
<dbReference type="Xenbase" id="XB-GENE-6253990">
    <property type="gene designation" value="mrpl28.L"/>
</dbReference>
<dbReference type="OrthoDB" id="361870at2759"/>
<dbReference type="Proteomes" id="UP000186698">
    <property type="component" value="Chromosome 9_10L"/>
</dbReference>
<dbReference type="Bgee" id="447374">
    <property type="expression patterns" value="Expressed in muscle tissue and 19 other cell types or tissues"/>
</dbReference>
<dbReference type="GO" id="GO:0005762">
    <property type="term" value="C:mitochondrial large ribosomal subunit"/>
    <property type="evidence" value="ECO:0000250"/>
    <property type="project" value="UniProtKB"/>
</dbReference>
<dbReference type="GO" id="GO:0003735">
    <property type="term" value="F:structural constituent of ribosome"/>
    <property type="evidence" value="ECO:0000318"/>
    <property type="project" value="GO_Central"/>
</dbReference>
<dbReference type="InterPro" id="IPR026569">
    <property type="entry name" value="Ribosomal_bL28"/>
</dbReference>
<dbReference type="InterPro" id="IPR034704">
    <property type="entry name" value="Ribosomal_bL28/bL31-like_sf"/>
</dbReference>
<dbReference type="PANTHER" id="PTHR13528">
    <property type="entry name" value="39S RIBOSOMAL PROTEIN L28, MITOCHONDRIAL"/>
    <property type="match status" value="1"/>
</dbReference>
<dbReference type="PANTHER" id="PTHR13528:SF2">
    <property type="entry name" value="LARGE RIBOSOMAL SUBUNIT PROTEIN BL28M"/>
    <property type="match status" value="1"/>
</dbReference>
<dbReference type="Pfam" id="PF00830">
    <property type="entry name" value="Ribosomal_L28"/>
    <property type="match status" value="1"/>
</dbReference>
<dbReference type="SUPFAM" id="SSF143800">
    <property type="entry name" value="L28p-like"/>
    <property type="match status" value="1"/>
</dbReference>
<name>RM28_XENLA</name>
<reference key="1">
    <citation type="submission" date="2004-08" db="EMBL/GenBank/DDBJ databases">
        <authorList>
            <consortium name="NIH - Xenopus Gene Collection (XGC) project"/>
        </authorList>
    </citation>
    <scope>NUCLEOTIDE SEQUENCE [LARGE SCALE MRNA]</scope>
    <source>
        <tissue>Brain</tissue>
    </source>
</reference>
<comment type="subunit">
    <text evidence="2">Component of the mitochondrial ribosome large subunit (39S) which comprises a 16S rRNA and about 50 distinct proteins.</text>
</comment>
<comment type="subcellular location">
    <subcellularLocation>
        <location evidence="2">Mitochondrion</location>
    </subcellularLocation>
</comment>
<comment type="similarity">
    <text evidence="3">Belongs to the bacterial ribosomal protein bL28 family.</text>
</comment>
<protein>
    <recommendedName>
        <fullName evidence="3">Large ribosomal subunit protein bL28m</fullName>
    </recommendedName>
    <alternativeName>
        <fullName>39S ribosomal protein L28, mitochondrial</fullName>
        <shortName>L28mt</shortName>
        <shortName>MRP-L28</shortName>
    </alternativeName>
</protein>
<sequence length="253" mass="29718">MPLHKYPPALWDVLKLKDGIYARLPEHYRRSLLEKHKPYPVHWKPHGLKYRLNPKSGQRERVQDVPILPYFPPQANKGLWGGEGWVTGYHYANNDKLSARVKKVWKPQLFKRELYSEILDKKFSITVTMRTLDLIDAAYGFDFYILKTPKEDLNSKVGMDFKRAMLMRLASKDSNLYPNDPSKRDQIYNKYKEFVIPMEEAEWVGLSLEEAVEKQRLLEKKDPTPLFKVYVEELVKQIETQTLAEPAIIGKKP</sequence>
<evidence type="ECO:0000250" key="1"/>
<evidence type="ECO:0000250" key="2">
    <source>
        <dbReference type="UniProtKB" id="Q13084"/>
    </source>
</evidence>
<evidence type="ECO:0000305" key="3"/>
<organism>
    <name type="scientific">Xenopus laevis</name>
    <name type="common">African clawed frog</name>
    <dbReference type="NCBI Taxonomy" id="8355"/>
    <lineage>
        <taxon>Eukaryota</taxon>
        <taxon>Metazoa</taxon>
        <taxon>Chordata</taxon>
        <taxon>Craniata</taxon>
        <taxon>Vertebrata</taxon>
        <taxon>Euteleostomi</taxon>
        <taxon>Amphibia</taxon>
        <taxon>Batrachia</taxon>
        <taxon>Anura</taxon>
        <taxon>Pipoidea</taxon>
        <taxon>Pipidae</taxon>
        <taxon>Xenopodinae</taxon>
        <taxon>Xenopus</taxon>
        <taxon>Xenopus</taxon>
    </lineage>
</organism>
<feature type="transit peptide" description="Mitochondrion" evidence="1">
    <location>
        <begin position="1"/>
        <end position="55"/>
    </location>
</feature>
<feature type="chain" id="PRO_0000045778" description="Large ribosomal subunit protein bL28m">
    <location>
        <begin position="56"/>
        <end position="253"/>
    </location>
</feature>
<accession>Q68EV6</accession>
<proteinExistence type="evidence at transcript level"/>
<keyword id="KW-0496">Mitochondrion</keyword>
<keyword id="KW-1185">Reference proteome</keyword>
<keyword id="KW-0687">Ribonucleoprotein</keyword>
<keyword id="KW-0689">Ribosomal protein</keyword>
<keyword id="KW-0809">Transit peptide</keyword>
<gene>
    <name type="primary">mrpl28</name>
</gene>